<dbReference type="EMBL" id="U00096">
    <property type="protein sequence ID" value="AAC74489.2"/>
    <property type="molecule type" value="Genomic_DNA"/>
</dbReference>
<dbReference type="EMBL" id="AP009048">
    <property type="protein sequence ID" value="BAA15022.2"/>
    <property type="molecule type" value="Genomic_DNA"/>
</dbReference>
<dbReference type="EMBL" id="X62680">
    <property type="protein sequence ID" value="CAA44554.1"/>
    <property type="molecule type" value="Genomic_DNA"/>
</dbReference>
<dbReference type="PIR" id="B64892">
    <property type="entry name" value="B64892"/>
</dbReference>
<dbReference type="RefSeq" id="NP_415925.2">
    <property type="nucleotide sequence ID" value="NC_000913.3"/>
</dbReference>
<dbReference type="RefSeq" id="WP_000910026.1">
    <property type="nucleotide sequence ID" value="NZ_LN832404.1"/>
</dbReference>
<dbReference type="BioGRID" id="4263020">
    <property type="interactions" value="10"/>
</dbReference>
<dbReference type="BioGRID" id="850345">
    <property type="interactions" value="2"/>
</dbReference>
<dbReference type="FunCoup" id="P25907">
    <property type="interactions" value="9"/>
</dbReference>
<dbReference type="IntAct" id="P25907">
    <property type="interactions" value="3"/>
</dbReference>
<dbReference type="STRING" id="511145.b1407"/>
<dbReference type="PaxDb" id="511145-b1407"/>
<dbReference type="EnsemblBacteria" id="AAC74489">
    <property type="protein sequence ID" value="AAC74489"/>
    <property type="gene ID" value="b1407"/>
</dbReference>
<dbReference type="GeneID" id="945983"/>
<dbReference type="KEGG" id="ecj:JW5221"/>
<dbReference type="KEGG" id="eco:b1407"/>
<dbReference type="KEGG" id="ecoc:C3026_08200"/>
<dbReference type="PATRIC" id="fig|1411691.4.peg.864"/>
<dbReference type="EchoBASE" id="EB1286"/>
<dbReference type="eggNOG" id="ENOG5033PQ4">
    <property type="taxonomic scope" value="Bacteria"/>
</dbReference>
<dbReference type="HOGENOM" id="CLU_027788_0_0_6"/>
<dbReference type="InParanoid" id="P25907"/>
<dbReference type="OMA" id="MPRNDIW"/>
<dbReference type="OrthoDB" id="6571559at2"/>
<dbReference type="BioCyc" id="EcoCyc:EG11310-MONOMER"/>
<dbReference type="PRO" id="PR:P25907"/>
<dbReference type="Proteomes" id="UP000000625">
    <property type="component" value="Chromosome"/>
</dbReference>
<dbReference type="GO" id="GO:0051595">
    <property type="term" value="P:response to methylglyoxal"/>
    <property type="evidence" value="ECO:0000269"/>
    <property type="project" value="EcoCyc"/>
</dbReference>
<dbReference type="InterPro" id="IPR024497">
    <property type="entry name" value="DUF2773"/>
</dbReference>
<dbReference type="Pfam" id="PF10971">
    <property type="entry name" value="DUF2773"/>
    <property type="match status" value="1"/>
</dbReference>
<name>YDBD_ECOLI</name>
<reference key="1">
    <citation type="journal article" date="1996" name="DNA Res.">
        <title>A 570-kb DNA sequence of the Escherichia coli K-12 genome corresponding to the 28.0-40.1 min region on the linkage map.</title>
        <authorList>
            <person name="Aiba H."/>
            <person name="Baba T."/>
            <person name="Fujita K."/>
            <person name="Hayashi K."/>
            <person name="Inada T."/>
            <person name="Isono K."/>
            <person name="Itoh T."/>
            <person name="Kasai H."/>
            <person name="Kashimoto K."/>
            <person name="Kimura S."/>
            <person name="Kitakawa M."/>
            <person name="Kitagawa M."/>
            <person name="Makino K."/>
            <person name="Miki T."/>
            <person name="Mizobuchi K."/>
            <person name="Mori H."/>
            <person name="Mori T."/>
            <person name="Motomura K."/>
            <person name="Nakade S."/>
            <person name="Nakamura Y."/>
            <person name="Nashimoto H."/>
            <person name="Nishio Y."/>
            <person name="Oshima T."/>
            <person name="Saito N."/>
            <person name="Sampei G."/>
            <person name="Seki Y."/>
            <person name="Sivasundaram S."/>
            <person name="Tagami H."/>
            <person name="Takeda J."/>
            <person name="Takemoto K."/>
            <person name="Takeuchi Y."/>
            <person name="Wada C."/>
            <person name="Yamamoto Y."/>
            <person name="Horiuchi T."/>
        </authorList>
    </citation>
    <scope>NUCLEOTIDE SEQUENCE [LARGE SCALE GENOMIC DNA]</scope>
    <source>
        <strain>K12 / W3110 / ATCC 27325 / DSM 5911</strain>
    </source>
</reference>
<reference key="2">
    <citation type="journal article" date="1997" name="Science">
        <title>The complete genome sequence of Escherichia coli K-12.</title>
        <authorList>
            <person name="Blattner F.R."/>
            <person name="Plunkett G. III"/>
            <person name="Bloch C.A."/>
            <person name="Perna N.T."/>
            <person name="Burland V."/>
            <person name="Riley M."/>
            <person name="Collado-Vides J."/>
            <person name="Glasner J.D."/>
            <person name="Rode C.K."/>
            <person name="Mayhew G.F."/>
            <person name="Gregor J."/>
            <person name="Davis N.W."/>
            <person name="Kirkpatrick H.A."/>
            <person name="Goeden M.A."/>
            <person name="Rose D.J."/>
            <person name="Mau B."/>
            <person name="Shao Y."/>
        </authorList>
    </citation>
    <scope>NUCLEOTIDE SEQUENCE [LARGE SCALE GENOMIC DNA]</scope>
    <source>
        <strain>K12 / MG1655 / ATCC 47076</strain>
    </source>
</reference>
<reference key="3">
    <citation type="journal article" date="2006" name="Mol. Syst. Biol.">
        <title>Highly accurate genome sequences of Escherichia coli K-12 strains MG1655 and W3110.</title>
        <authorList>
            <person name="Hayashi K."/>
            <person name="Morooka N."/>
            <person name="Yamamoto Y."/>
            <person name="Fujita K."/>
            <person name="Isono K."/>
            <person name="Choi S."/>
            <person name="Ohtsubo E."/>
            <person name="Baba T."/>
            <person name="Wanner B.L."/>
            <person name="Mori H."/>
            <person name="Horiuchi T."/>
        </authorList>
    </citation>
    <scope>NUCLEOTIDE SEQUENCE [LARGE SCALE GENOMIC DNA]</scope>
    <scope>SEQUENCE REVISION TO 450</scope>
    <source>
        <strain>K12 / W3110 / ATCC 27325 / DSM 5911</strain>
    </source>
</reference>
<reference key="4">
    <citation type="journal article" date="1991" name="Biochimie">
        <title>Multiple IS insertion sequences near the replication terminus in Escherichia coli K-12.</title>
        <authorList>
            <person name="Moszer I."/>
            <person name="Glaser P."/>
            <person name="Danchin A."/>
        </authorList>
    </citation>
    <scope>NUCLEOTIDE SEQUENCE [GENOMIC DNA] OF 1-350</scope>
    <source>
        <strain>K12</strain>
    </source>
</reference>
<feature type="chain" id="PRO_0000168921" description="Uncharacterized protein YdbD">
    <location>
        <begin position="1"/>
        <end position="768"/>
    </location>
</feature>
<feature type="sequence conflict" description="In Ref. 4; CAA44554." evidence="1" ref="4">
    <original>L</original>
    <variation>Y</variation>
    <location>
        <position position="347"/>
    </location>
</feature>
<organism>
    <name type="scientific">Escherichia coli (strain K12)</name>
    <dbReference type="NCBI Taxonomy" id="83333"/>
    <lineage>
        <taxon>Bacteria</taxon>
        <taxon>Pseudomonadati</taxon>
        <taxon>Pseudomonadota</taxon>
        <taxon>Gammaproteobacteria</taxon>
        <taxon>Enterobacterales</taxon>
        <taxon>Enterobacteriaceae</taxon>
        <taxon>Escherichia</taxon>
    </lineage>
</organism>
<gene>
    <name type="primary">ydbD</name>
    <name type="ordered locus">b1407</name>
    <name type="ordered locus">JW5221</name>
</gene>
<protein>
    <recommendedName>
        <fullName>Uncharacterized protein YdbD</fullName>
    </recommendedName>
</protein>
<evidence type="ECO:0000305" key="1"/>
<comment type="similarity">
    <text evidence="1">To E.coli YkiA.</text>
</comment>
<accession>P25907</accession>
<accession>P76089</accession>
<accession>P76860</accession>
<accession>P76862</accession>
<proteinExistence type="predicted"/>
<sequence length="768" mass="86716">MLKARNCGWIRLLPLFMLSLPVQAELRCVANAVDIESFFSAATAEDKQQVEQAINSSVNLVPFGLSASNWKVHRGDLVVEGNIESNQKLIVLGNLTVKGNISTFSLSNPWVILGNVTATNIVADSPLLITGSINASGLVFIDSYYDNPSTIKGSINARGIFINDIIAPVVASSTNSEFMVRASDKHDTENVKKALMIINPDAYYWGLINDEDALKEIFKRSNIRMAGNVCNQMKKEALFRPKPSPELVQELQMLDEGKVAAFEGRDIATFDLAVMRTLPRLKGISANLRKQLINSNDEQTIESMARYMPDNEILELTDQQLGYQPVVLGLLDREPLSVEIMTRMSRLPDGVGPLNLALRENLPLDIVMTLAKRDWDMIIQELYKDAWLLPESIIDGYIRSDDSSIRQVGAGGQLTYNQAMQLANDSSNNVVTSLAFKLAEMKHHGQLLRMTPQESDKVAGYLYQKFENDDDLIRVLFLALPDNLQFNFVKRMEKKSPAYFCCRDMQVIHSDAALQRLLTRFNDPEGWSNLAKNQYLSTSMKQKIWQRALSHRKNNPKADSDAYETSADMILSELISHGEVDDQMLLNATALIRSDDWDFLESALISWDNLPAVVLKELQQNTPRNDIWAKFFLRQENSSRAQVDEALRVYYALDPDALAQLDVLAKQPDRIWWSTLAKSNLTFFKFGALNNRHTPPAVLAAEIDPEWWIVAMNNPRFPVDVLKARLKRDPLLALELVNPELDLVRQLALNGKTRAIREQAMRKLDELY</sequence>
<keyword id="KW-1185">Reference proteome</keyword>